<name>KLH34_HUMAN</name>
<feature type="chain" id="PRO_0000274597" description="Kelch-like protein 34">
    <location>
        <begin position="1"/>
        <end position="644"/>
    </location>
</feature>
<feature type="domain" description="BTB" evidence="1">
    <location>
        <begin position="29"/>
        <end position="96"/>
    </location>
</feature>
<feature type="domain" description="BACK">
    <location>
        <begin position="131"/>
        <end position="238"/>
    </location>
</feature>
<feature type="repeat" description="Kelch 1">
    <location>
        <begin position="320"/>
        <end position="366"/>
    </location>
</feature>
<feature type="repeat" description="Kelch 2">
    <location>
        <begin position="367"/>
        <end position="425"/>
    </location>
</feature>
<feature type="repeat" description="Kelch 3">
    <location>
        <begin position="426"/>
        <end position="473"/>
    </location>
</feature>
<feature type="repeat" description="Kelch 4">
    <location>
        <begin position="475"/>
        <end position="526"/>
    </location>
</feature>
<feature type="repeat" description="Kelch 5">
    <location>
        <begin position="528"/>
        <end position="571"/>
    </location>
</feature>
<feature type="repeat" description="Kelch 6">
    <location>
        <begin position="573"/>
        <end position="623"/>
    </location>
</feature>
<feature type="region of interest" description="Disordered" evidence="2">
    <location>
        <begin position="304"/>
        <end position="329"/>
    </location>
</feature>
<feature type="compositionally biased region" description="Acidic residues" evidence="2">
    <location>
        <begin position="313"/>
        <end position="329"/>
    </location>
</feature>
<protein>
    <recommendedName>
        <fullName>Kelch-like protein 34</fullName>
    </recommendedName>
</protein>
<proteinExistence type="evidence at protein level"/>
<organism>
    <name type="scientific">Homo sapiens</name>
    <name type="common">Human</name>
    <dbReference type="NCBI Taxonomy" id="9606"/>
    <lineage>
        <taxon>Eukaryota</taxon>
        <taxon>Metazoa</taxon>
        <taxon>Chordata</taxon>
        <taxon>Craniata</taxon>
        <taxon>Vertebrata</taxon>
        <taxon>Euteleostomi</taxon>
        <taxon>Mammalia</taxon>
        <taxon>Eutheria</taxon>
        <taxon>Euarchontoglires</taxon>
        <taxon>Primates</taxon>
        <taxon>Haplorrhini</taxon>
        <taxon>Catarrhini</taxon>
        <taxon>Hominidae</taxon>
        <taxon>Homo</taxon>
    </lineage>
</organism>
<gene>
    <name type="primary">KLHL34</name>
</gene>
<accession>Q8N239</accession>
<reference key="1">
    <citation type="journal article" date="2004" name="Nat. Genet.">
        <title>Complete sequencing and characterization of 21,243 full-length human cDNAs.</title>
        <authorList>
            <person name="Ota T."/>
            <person name="Suzuki Y."/>
            <person name="Nishikawa T."/>
            <person name="Otsuki T."/>
            <person name="Sugiyama T."/>
            <person name="Irie R."/>
            <person name="Wakamatsu A."/>
            <person name="Hayashi K."/>
            <person name="Sato H."/>
            <person name="Nagai K."/>
            <person name="Kimura K."/>
            <person name="Makita H."/>
            <person name="Sekine M."/>
            <person name="Obayashi M."/>
            <person name="Nishi T."/>
            <person name="Shibahara T."/>
            <person name="Tanaka T."/>
            <person name="Ishii S."/>
            <person name="Yamamoto J."/>
            <person name="Saito K."/>
            <person name="Kawai Y."/>
            <person name="Isono Y."/>
            <person name="Nakamura Y."/>
            <person name="Nagahari K."/>
            <person name="Murakami K."/>
            <person name="Yasuda T."/>
            <person name="Iwayanagi T."/>
            <person name="Wagatsuma M."/>
            <person name="Shiratori A."/>
            <person name="Sudo H."/>
            <person name="Hosoiri T."/>
            <person name="Kaku Y."/>
            <person name="Kodaira H."/>
            <person name="Kondo H."/>
            <person name="Sugawara M."/>
            <person name="Takahashi M."/>
            <person name="Kanda K."/>
            <person name="Yokoi T."/>
            <person name="Furuya T."/>
            <person name="Kikkawa E."/>
            <person name="Omura Y."/>
            <person name="Abe K."/>
            <person name="Kamihara K."/>
            <person name="Katsuta N."/>
            <person name="Sato K."/>
            <person name="Tanikawa M."/>
            <person name="Yamazaki M."/>
            <person name="Ninomiya K."/>
            <person name="Ishibashi T."/>
            <person name="Yamashita H."/>
            <person name="Murakawa K."/>
            <person name="Fujimori K."/>
            <person name="Tanai H."/>
            <person name="Kimata M."/>
            <person name="Watanabe M."/>
            <person name="Hiraoka S."/>
            <person name="Chiba Y."/>
            <person name="Ishida S."/>
            <person name="Ono Y."/>
            <person name="Takiguchi S."/>
            <person name="Watanabe S."/>
            <person name="Yosida M."/>
            <person name="Hotuta T."/>
            <person name="Kusano J."/>
            <person name="Kanehori K."/>
            <person name="Takahashi-Fujii A."/>
            <person name="Hara H."/>
            <person name="Tanase T.-O."/>
            <person name="Nomura Y."/>
            <person name="Togiya S."/>
            <person name="Komai F."/>
            <person name="Hara R."/>
            <person name="Takeuchi K."/>
            <person name="Arita M."/>
            <person name="Imose N."/>
            <person name="Musashino K."/>
            <person name="Yuuki H."/>
            <person name="Oshima A."/>
            <person name="Sasaki N."/>
            <person name="Aotsuka S."/>
            <person name="Yoshikawa Y."/>
            <person name="Matsunawa H."/>
            <person name="Ichihara T."/>
            <person name="Shiohata N."/>
            <person name="Sano S."/>
            <person name="Moriya S."/>
            <person name="Momiyama H."/>
            <person name="Satoh N."/>
            <person name="Takami S."/>
            <person name="Terashima Y."/>
            <person name="Suzuki O."/>
            <person name="Nakagawa S."/>
            <person name="Senoh A."/>
            <person name="Mizoguchi H."/>
            <person name="Goto Y."/>
            <person name="Shimizu F."/>
            <person name="Wakebe H."/>
            <person name="Hishigaki H."/>
            <person name="Watanabe T."/>
            <person name="Sugiyama A."/>
            <person name="Takemoto M."/>
            <person name="Kawakami B."/>
            <person name="Yamazaki M."/>
            <person name="Watanabe K."/>
            <person name="Kumagai A."/>
            <person name="Itakura S."/>
            <person name="Fukuzumi Y."/>
            <person name="Fujimori Y."/>
            <person name="Komiyama M."/>
            <person name="Tashiro H."/>
            <person name="Tanigami A."/>
            <person name="Fujiwara T."/>
            <person name="Ono T."/>
            <person name="Yamada K."/>
            <person name="Fujii Y."/>
            <person name="Ozaki K."/>
            <person name="Hirao M."/>
            <person name="Ohmori Y."/>
            <person name="Kawabata A."/>
            <person name="Hikiji T."/>
            <person name="Kobatake N."/>
            <person name="Inagaki H."/>
            <person name="Ikema Y."/>
            <person name="Okamoto S."/>
            <person name="Okitani R."/>
            <person name="Kawakami T."/>
            <person name="Noguchi S."/>
            <person name="Itoh T."/>
            <person name="Shigeta K."/>
            <person name="Senba T."/>
            <person name="Matsumura K."/>
            <person name="Nakajima Y."/>
            <person name="Mizuno T."/>
            <person name="Morinaga M."/>
            <person name="Sasaki M."/>
            <person name="Togashi T."/>
            <person name="Oyama M."/>
            <person name="Hata H."/>
            <person name="Watanabe M."/>
            <person name="Komatsu T."/>
            <person name="Mizushima-Sugano J."/>
            <person name="Satoh T."/>
            <person name="Shirai Y."/>
            <person name="Takahashi Y."/>
            <person name="Nakagawa K."/>
            <person name="Okumura K."/>
            <person name="Nagase T."/>
            <person name="Nomura N."/>
            <person name="Kikuchi H."/>
            <person name="Masuho Y."/>
            <person name="Yamashita R."/>
            <person name="Nakai K."/>
            <person name="Yada T."/>
            <person name="Nakamura Y."/>
            <person name="Ohara O."/>
            <person name="Isogai T."/>
            <person name="Sugano S."/>
        </authorList>
    </citation>
    <scope>NUCLEOTIDE SEQUENCE [LARGE SCALE MRNA]</scope>
    <source>
        <tissue>Tongue</tissue>
    </source>
</reference>
<reference key="2">
    <citation type="journal article" date="2005" name="Nature">
        <title>The DNA sequence of the human X chromosome.</title>
        <authorList>
            <person name="Ross M.T."/>
            <person name="Grafham D.V."/>
            <person name="Coffey A.J."/>
            <person name="Scherer S."/>
            <person name="McLay K."/>
            <person name="Muzny D."/>
            <person name="Platzer M."/>
            <person name="Howell G.R."/>
            <person name="Burrows C."/>
            <person name="Bird C.P."/>
            <person name="Frankish A."/>
            <person name="Lovell F.L."/>
            <person name="Howe K.L."/>
            <person name="Ashurst J.L."/>
            <person name="Fulton R.S."/>
            <person name="Sudbrak R."/>
            <person name="Wen G."/>
            <person name="Jones M.C."/>
            <person name="Hurles M.E."/>
            <person name="Andrews T.D."/>
            <person name="Scott C.E."/>
            <person name="Searle S."/>
            <person name="Ramser J."/>
            <person name="Whittaker A."/>
            <person name="Deadman R."/>
            <person name="Carter N.P."/>
            <person name="Hunt S.E."/>
            <person name="Chen R."/>
            <person name="Cree A."/>
            <person name="Gunaratne P."/>
            <person name="Havlak P."/>
            <person name="Hodgson A."/>
            <person name="Metzker M.L."/>
            <person name="Richards S."/>
            <person name="Scott G."/>
            <person name="Steffen D."/>
            <person name="Sodergren E."/>
            <person name="Wheeler D.A."/>
            <person name="Worley K.C."/>
            <person name="Ainscough R."/>
            <person name="Ambrose K.D."/>
            <person name="Ansari-Lari M.A."/>
            <person name="Aradhya S."/>
            <person name="Ashwell R.I."/>
            <person name="Babbage A.K."/>
            <person name="Bagguley C.L."/>
            <person name="Ballabio A."/>
            <person name="Banerjee R."/>
            <person name="Barker G.E."/>
            <person name="Barlow K.F."/>
            <person name="Barrett I.P."/>
            <person name="Bates K.N."/>
            <person name="Beare D.M."/>
            <person name="Beasley H."/>
            <person name="Beasley O."/>
            <person name="Beck A."/>
            <person name="Bethel G."/>
            <person name="Blechschmidt K."/>
            <person name="Brady N."/>
            <person name="Bray-Allen S."/>
            <person name="Bridgeman A.M."/>
            <person name="Brown A.J."/>
            <person name="Brown M.J."/>
            <person name="Bonnin D."/>
            <person name="Bruford E.A."/>
            <person name="Buhay C."/>
            <person name="Burch P."/>
            <person name="Burford D."/>
            <person name="Burgess J."/>
            <person name="Burrill W."/>
            <person name="Burton J."/>
            <person name="Bye J.M."/>
            <person name="Carder C."/>
            <person name="Carrel L."/>
            <person name="Chako J."/>
            <person name="Chapman J.C."/>
            <person name="Chavez D."/>
            <person name="Chen E."/>
            <person name="Chen G."/>
            <person name="Chen Y."/>
            <person name="Chen Z."/>
            <person name="Chinault C."/>
            <person name="Ciccodicola A."/>
            <person name="Clark S.Y."/>
            <person name="Clarke G."/>
            <person name="Clee C.M."/>
            <person name="Clegg S."/>
            <person name="Clerc-Blankenburg K."/>
            <person name="Clifford K."/>
            <person name="Cobley V."/>
            <person name="Cole C.G."/>
            <person name="Conquer J.S."/>
            <person name="Corby N."/>
            <person name="Connor R.E."/>
            <person name="David R."/>
            <person name="Davies J."/>
            <person name="Davis C."/>
            <person name="Davis J."/>
            <person name="Delgado O."/>
            <person name="Deshazo D."/>
            <person name="Dhami P."/>
            <person name="Ding Y."/>
            <person name="Dinh H."/>
            <person name="Dodsworth S."/>
            <person name="Draper H."/>
            <person name="Dugan-Rocha S."/>
            <person name="Dunham A."/>
            <person name="Dunn M."/>
            <person name="Durbin K.J."/>
            <person name="Dutta I."/>
            <person name="Eades T."/>
            <person name="Ellwood M."/>
            <person name="Emery-Cohen A."/>
            <person name="Errington H."/>
            <person name="Evans K.L."/>
            <person name="Faulkner L."/>
            <person name="Francis F."/>
            <person name="Frankland J."/>
            <person name="Fraser A.E."/>
            <person name="Galgoczy P."/>
            <person name="Gilbert J."/>
            <person name="Gill R."/>
            <person name="Gloeckner G."/>
            <person name="Gregory S.G."/>
            <person name="Gribble S."/>
            <person name="Griffiths C."/>
            <person name="Grocock R."/>
            <person name="Gu Y."/>
            <person name="Gwilliam R."/>
            <person name="Hamilton C."/>
            <person name="Hart E.A."/>
            <person name="Hawes A."/>
            <person name="Heath P.D."/>
            <person name="Heitmann K."/>
            <person name="Hennig S."/>
            <person name="Hernandez J."/>
            <person name="Hinzmann B."/>
            <person name="Ho S."/>
            <person name="Hoffs M."/>
            <person name="Howden P.J."/>
            <person name="Huckle E.J."/>
            <person name="Hume J."/>
            <person name="Hunt P.J."/>
            <person name="Hunt A.R."/>
            <person name="Isherwood J."/>
            <person name="Jacob L."/>
            <person name="Johnson D."/>
            <person name="Jones S."/>
            <person name="de Jong P.J."/>
            <person name="Joseph S.S."/>
            <person name="Keenan S."/>
            <person name="Kelly S."/>
            <person name="Kershaw J.K."/>
            <person name="Khan Z."/>
            <person name="Kioschis P."/>
            <person name="Klages S."/>
            <person name="Knights A.J."/>
            <person name="Kosiura A."/>
            <person name="Kovar-Smith C."/>
            <person name="Laird G.K."/>
            <person name="Langford C."/>
            <person name="Lawlor S."/>
            <person name="Leversha M."/>
            <person name="Lewis L."/>
            <person name="Liu W."/>
            <person name="Lloyd C."/>
            <person name="Lloyd D.M."/>
            <person name="Loulseged H."/>
            <person name="Loveland J.E."/>
            <person name="Lovell J.D."/>
            <person name="Lozado R."/>
            <person name="Lu J."/>
            <person name="Lyne R."/>
            <person name="Ma J."/>
            <person name="Maheshwari M."/>
            <person name="Matthews L.H."/>
            <person name="McDowall J."/>
            <person name="McLaren S."/>
            <person name="McMurray A."/>
            <person name="Meidl P."/>
            <person name="Meitinger T."/>
            <person name="Milne S."/>
            <person name="Miner G."/>
            <person name="Mistry S.L."/>
            <person name="Morgan M."/>
            <person name="Morris S."/>
            <person name="Mueller I."/>
            <person name="Mullikin J.C."/>
            <person name="Nguyen N."/>
            <person name="Nordsiek G."/>
            <person name="Nyakatura G."/>
            <person name="O'dell C.N."/>
            <person name="Okwuonu G."/>
            <person name="Palmer S."/>
            <person name="Pandian R."/>
            <person name="Parker D."/>
            <person name="Parrish J."/>
            <person name="Pasternak S."/>
            <person name="Patel D."/>
            <person name="Pearce A.V."/>
            <person name="Pearson D.M."/>
            <person name="Pelan S.E."/>
            <person name="Perez L."/>
            <person name="Porter K.M."/>
            <person name="Ramsey Y."/>
            <person name="Reichwald K."/>
            <person name="Rhodes S."/>
            <person name="Ridler K.A."/>
            <person name="Schlessinger D."/>
            <person name="Schueler M.G."/>
            <person name="Sehra H.K."/>
            <person name="Shaw-Smith C."/>
            <person name="Shen H."/>
            <person name="Sheridan E.M."/>
            <person name="Shownkeen R."/>
            <person name="Skuce C.D."/>
            <person name="Smith M.L."/>
            <person name="Sotheran E.C."/>
            <person name="Steingruber H.E."/>
            <person name="Steward C.A."/>
            <person name="Storey R."/>
            <person name="Swann R.M."/>
            <person name="Swarbreck D."/>
            <person name="Tabor P.E."/>
            <person name="Taudien S."/>
            <person name="Taylor T."/>
            <person name="Teague B."/>
            <person name="Thomas K."/>
            <person name="Thorpe A."/>
            <person name="Timms K."/>
            <person name="Tracey A."/>
            <person name="Trevanion S."/>
            <person name="Tromans A.C."/>
            <person name="d'Urso M."/>
            <person name="Verduzco D."/>
            <person name="Villasana D."/>
            <person name="Waldron L."/>
            <person name="Wall M."/>
            <person name="Wang Q."/>
            <person name="Warren J."/>
            <person name="Warry G.L."/>
            <person name="Wei X."/>
            <person name="West A."/>
            <person name="Whitehead S.L."/>
            <person name="Whiteley M.N."/>
            <person name="Wilkinson J.E."/>
            <person name="Willey D.L."/>
            <person name="Williams G."/>
            <person name="Williams L."/>
            <person name="Williamson A."/>
            <person name="Williamson H."/>
            <person name="Wilming L."/>
            <person name="Woodmansey R.L."/>
            <person name="Wray P.W."/>
            <person name="Yen J."/>
            <person name="Zhang J."/>
            <person name="Zhou J."/>
            <person name="Zoghbi H."/>
            <person name="Zorilla S."/>
            <person name="Buck D."/>
            <person name="Reinhardt R."/>
            <person name="Poustka A."/>
            <person name="Rosenthal A."/>
            <person name="Lehrach H."/>
            <person name="Meindl A."/>
            <person name="Minx P.J."/>
            <person name="Hillier L.W."/>
            <person name="Willard H.F."/>
            <person name="Wilson R.K."/>
            <person name="Waterston R.H."/>
            <person name="Rice C.M."/>
            <person name="Vaudin M."/>
            <person name="Coulson A."/>
            <person name="Nelson D.L."/>
            <person name="Weinstock G."/>
            <person name="Sulston J.E."/>
            <person name="Durbin R.M."/>
            <person name="Hubbard T."/>
            <person name="Gibbs R.A."/>
            <person name="Beck S."/>
            <person name="Rogers J."/>
            <person name="Bentley D.R."/>
        </authorList>
    </citation>
    <scope>NUCLEOTIDE SEQUENCE [LARGE SCALE GENOMIC DNA]</scope>
</reference>
<reference key="3">
    <citation type="journal article" date="2004" name="Genome Res.">
        <title>The status, quality, and expansion of the NIH full-length cDNA project: the Mammalian Gene Collection (MGC).</title>
        <authorList>
            <consortium name="The MGC Project Team"/>
        </authorList>
    </citation>
    <scope>NUCLEOTIDE SEQUENCE [LARGE SCALE MRNA]</scope>
</reference>
<sequence>MSYFLSYCKAHGGALLTGYQALRAEGFLCDVTLETEGSEFPAHRSLLACSSDYFRALFKSHTQESRARVIHLHVPSAAGLQRLLDFIYTAWLSLSMDTVEDTLEAASYLQVTEALGLCGRYLERQLAPENCCFAANVAARFGLAHTLDAAERCIVSHLQELLARGAGPAGLLELNPTSLRAVLGAPDVARVPEARLLGLALAWLRQEPTTERLAHCTELLERVRFGLVPADVLRRVYSGSGLVLPARVKGLIIQALNYHTTPSRQPLMQGEQTSIRSPQTRILLVGGRRAREVVIEEVAAPQRAARGQVAAPEPEEEEEELEEEEEEEEWELTQNVVAFDVYNHRWRSLTQLPTPLLGHSVCTAGNFLFVLGGESPSGSASSPLADDSRVVTAQVHRYDPRFHAWTEVPAMREARAHFWCGAVGERLLAVGGLGAGGEVLASVEMYDLRRDRWTAAGALPRALHGHAGAVGDRGVVYISGGKAGRGEGGASSLRDLYVLGPEEQVWSKKAPMGTARFGHHMAVLRGAVFAFLGRYEPFSEIERYDPGADQWTRLRPLPYDRFCYGLAVVEETALLLGGLKWRDSRQVPTRNVVGYDLDLDRWEDIGCALPWAWSGLRCAVLQLAEGGDDEREGEVGEALDLVLG</sequence>
<evidence type="ECO:0000255" key="1">
    <source>
        <dbReference type="PROSITE-ProRule" id="PRU00037"/>
    </source>
</evidence>
<evidence type="ECO:0000256" key="2">
    <source>
        <dbReference type="SAM" id="MobiDB-lite"/>
    </source>
</evidence>
<keyword id="KW-0880">Kelch repeat</keyword>
<keyword id="KW-1267">Proteomics identification</keyword>
<keyword id="KW-1185">Reference proteome</keyword>
<keyword id="KW-0677">Repeat</keyword>
<dbReference type="EMBL" id="AK092279">
    <property type="protein sequence ID" value="BAC03848.1"/>
    <property type="molecule type" value="mRNA"/>
</dbReference>
<dbReference type="EMBL" id="AL772392">
    <property type="status" value="NOT_ANNOTATED_CDS"/>
    <property type="molecule type" value="Genomic_DNA"/>
</dbReference>
<dbReference type="EMBL" id="BC109031">
    <property type="protein sequence ID" value="AAI09032.1"/>
    <property type="molecule type" value="mRNA"/>
</dbReference>
<dbReference type="CCDS" id="CCDS14199.1"/>
<dbReference type="RefSeq" id="NP_695002.1">
    <property type="nucleotide sequence ID" value="NM_153270.3"/>
</dbReference>
<dbReference type="SMR" id="Q8N239"/>
<dbReference type="BioGRID" id="129210">
    <property type="interactions" value="72"/>
</dbReference>
<dbReference type="ComplexPortal" id="CPX-8202">
    <property type="entry name" value="CRL3 E3 ubiquitin ligase complex, KLHL34 variant"/>
</dbReference>
<dbReference type="FunCoup" id="Q8N239">
    <property type="interactions" value="52"/>
</dbReference>
<dbReference type="IntAct" id="Q8N239">
    <property type="interactions" value="61"/>
</dbReference>
<dbReference type="STRING" id="9606.ENSP00000368813"/>
<dbReference type="GlyGen" id="Q8N239">
    <property type="glycosylation" value="1 site, 1 O-linked glycan (1 site)"/>
</dbReference>
<dbReference type="iPTMnet" id="Q8N239"/>
<dbReference type="PhosphoSitePlus" id="Q8N239"/>
<dbReference type="BioMuta" id="KLHL34"/>
<dbReference type="DMDM" id="74750913"/>
<dbReference type="jPOST" id="Q8N239"/>
<dbReference type="MassIVE" id="Q8N239"/>
<dbReference type="PaxDb" id="9606-ENSP00000368813"/>
<dbReference type="PeptideAtlas" id="Q8N239"/>
<dbReference type="ProteomicsDB" id="71653"/>
<dbReference type="Antibodypedia" id="55233">
    <property type="antibodies" value="35 antibodies from 12 providers"/>
</dbReference>
<dbReference type="DNASU" id="257240"/>
<dbReference type="Ensembl" id="ENST00000379499.3">
    <property type="protein sequence ID" value="ENSP00000368813.2"/>
    <property type="gene ID" value="ENSG00000185915.5"/>
</dbReference>
<dbReference type="GeneID" id="257240"/>
<dbReference type="KEGG" id="hsa:257240"/>
<dbReference type="MANE-Select" id="ENST00000379499.3">
    <property type="protein sequence ID" value="ENSP00000368813.2"/>
    <property type="RefSeq nucleotide sequence ID" value="NM_153270.3"/>
    <property type="RefSeq protein sequence ID" value="NP_695002.1"/>
</dbReference>
<dbReference type="UCSC" id="uc004czz.2">
    <property type="organism name" value="human"/>
</dbReference>
<dbReference type="AGR" id="HGNC:26634"/>
<dbReference type="CTD" id="257240"/>
<dbReference type="DisGeNET" id="257240"/>
<dbReference type="GeneCards" id="KLHL34"/>
<dbReference type="HGNC" id="HGNC:26634">
    <property type="gene designation" value="KLHL34"/>
</dbReference>
<dbReference type="HPA" id="ENSG00000185915">
    <property type="expression patterns" value="Tissue enriched (skeletal)"/>
</dbReference>
<dbReference type="neXtProt" id="NX_Q8N239"/>
<dbReference type="OpenTargets" id="ENSG00000185915"/>
<dbReference type="PharmGKB" id="PA162393594"/>
<dbReference type="VEuPathDB" id="HostDB:ENSG00000185915"/>
<dbReference type="eggNOG" id="KOG4441">
    <property type="taxonomic scope" value="Eukaryota"/>
</dbReference>
<dbReference type="GeneTree" id="ENSGT00940000162424"/>
<dbReference type="HOGENOM" id="CLU_004253_14_3_1"/>
<dbReference type="InParanoid" id="Q8N239"/>
<dbReference type="OMA" id="RNVVGYD"/>
<dbReference type="OrthoDB" id="10027872at2759"/>
<dbReference type="PAN-GO" id="Q8N239">
    <property type="GO annotations" value="0 GO annotations based on evolutionary models"/>
</dbReference>
<dbReference type="PhylomeDB" id="Q8N239"/>
<dbReference type="TreeFam" id="TF328485"/>
<dbReference type="PathwayCommons" id="Q8N239"/>
<dbReference type="SignaLink" id="Q8N239"/>
<dbReference type="BioGRID-ORCS" id="257240">
    <property type="hits" value="10 hits in 808 CRISPR screens"/>
</dbReference>
<dbReference type="GenomeRNAi" id="257240"/>
<dbReference type="Pharos" id="Q8N239">
    <property type="development level" value="Tdark"/>
</dbReference>
<dbReference type="PRO" id="PR:Q8N239"/>
<dbReference type="Proteomes" id="UP000005640">
    <property type="component" value="Chromosome X"/>
</dbReference>
<dbReference type="RNAct" id="Q8N239">
    <property type="molecule type" value="protein"/>
</dbReference>
<dbReference type="Bgee" id="ENSG00000185915">
    <property type="expression patterns" value="Expressed in skeletal muscle tissue of rectus abdominis and 73 other cell types or tissues"/>
</dbReference>
<dbReference type="GO" id="GO:0005615">
    <property type="term" value="C:extracellular space"/>
    <property type="evidence" value="ECO:0007005"/>
    <property type="project" value="UniProtKB"/>
</dbReference>
<dbReference type="CDD" id="cd18473">
    <property type="entry name" value="BACK_KLHL34"/>
    <property type="match status" value="1"/>
</dbReference>
<dbReference type="CDD" id="cd18264">
    <property type="entry name" value="BTB_POZ_KLHL34"/>
    <property type="match status" value="1"/>
</dbReference>
<dbReference type="FunFam" id="3.30.710.10:FF:000135">
    <property type="entry name" value="Kelch-like family member 34"/>
    <property type="match status" value="1"/>
</dbReference>
<dbReference type="FunFam" id="2.120.10.80:FF:000109">
    <property type="entry name" value="Kelch-like protein 34"/>
    <property type="match status" value="1"/>
</dbReference>
<dbReference type="Gene3D" id="1.25.40.420">
    <property type="match status" value="1"/>
</dbReference>
<dbReference type="Gene3D" id="2.120.10.80">
    <property type="entry name" value="Kelch-type beta propeller"/>
    <property type="match status" value="1"/>
</dbReference>
<dbReference type="Gene3D" id="3.30.710.10">
    <property type="entry name" value="Potassium Channel Kv1.1, Chain A"/>
    <property type="match status" value="1"/>
</dbReference>
<dbReference type="InterPro" id="IPR011705">
    <property type="entry name" value="BACK"/>
</dbReference>
<dbReference type="InterPro" id="IPR017096">
    <property type="entry name" value="BTB-kelch_protein"/>
</dbReference>
<dbReference type="InterPro" id="IPR000210">
    <property type="entry name" value="BTB/POZ_dom"/>
</dbReference>
<dbReference type="InterPro" id="IPR015915">
    <property type="entry name" value="Kelch-typ_b-propeller"/>
</dbReference>
<dbReference type="InterPro" id="IPR006652">
    <property type="entry name" value="Kelch_1"/>
</dbReference>
<dbReference type="InterPro" id="IPR011333">
    <property type="entry name" value="SKP1/BTB/POZ_sf"/>
</dbReference>
<dbReference type="PANTHER" id="PTHR45632:SF8">
    <property type="entry name" value="KELCH-LIKE PROTEIN 34"/>
    <property type="match status" value="1"/>
</dbReference>
<dbReference type="PANTHER" id="PTHR45632">
    <property type="entry name" value="LD33804P"/>
    <property type="match status" value="1"/>
</dbReference>
<dbReference type="Pfam" id="PF07707">
    <property type="entry name" value="BACK"/>
    <property type="match status" value="1"/>
</dbReference>
<dbReference type="Pfam" id="PF00651">
    <property type="entry name" value="BTB"/>
    <property type="match status" value="1"/>
</dbReference>
<dbReference type="Pfam" id="PF24681">
    <property type="entry name" value="Kelch_KLHDC2_KLHL20_DRC7"/>
    <property type="match status" value="1"/>
</dbReference>
<dbReference type="PIRSF" id="PIRSF037037">
    <property type="entry name" value="Kelch-like_protein_gigaxonin"/>
    <property type="match status" value="1"/>
</dbReference>
<dbReference type="SMART" id="SM00875">
    <property type="entry name" value="BACK"/>
    <property type="match status" value="1"/>
</dbReference>
<dbReference type="SMART" id="SM00225">
    <property type="entry name" value="BTB"/>
    <property type="match status" value="1"/>
</dbReference>
<dbReference type="SMART" id="SM00612">
    <property type="entry name" value="Kelch"/>
    <property type="match status" value="5"/>
</dbReference>
<dbReference type="SUPFAM" id="SSF117281">
    <property type="entry name" value="Kelch motif"/>
    <property type="match status" value="1"/>
</dbReference>
<dbReference type="SUPFAM" id="SSF54695">
    <property type="entry name" value="POZ domain"/>
    <property type="match status" value="1"/>
</dbReference>
<dbReference type="PROSITE" id="PS50097">
    <property type="entry name" value="BTB"/>
    <property type="match status" value="1"/>
</dbReference>